<sequence>MERISLTIEKNLLKEVDEIINKERISRSEFIRRALEYYVKKYDWLSRIESKIGEITVIYNSKAVEDIVKLESQYKDIVIISLEIPFEGKIIRMIAIKGQRDRIIEFTNKLKGISSVELAQLTTISIE</sequence>
<reference key="1">
    <citation type="journal article" date="1996" name="Science">
        <title>Complete genome sequence of the methanogenic archaeon, Methanococcus jannaschii.</title>
        <authorList>
            <person name="Bult C.J."/>
            <person name="White O."/>
            <person name="Olsen G.J."/>
            <person name="Zhou L."/>
            <person name="Fleischmann R.D."/>
            <person name="Sutton G.G."/>
            <person name="Blake J.A."/>
            <person name="FitzGerald L.M."/>
            <person name="Clayton R.A."/>
            <person name="Gocayne J.D."/>
            <person name="Kerlavage A.R."/>
            <person name="Dougherty B.A."/>
            <person name="Tomb J.-F."/>
            <person name="Adams M.D."/>
            <person name="Reich C.I."/>
            <person name="Overbeek R."/>
            <person name="Kirkness E.F."/>
            <person name="Weinstock K.G."/>
            <person name="Merrick J.M."/>
            <person name="Glodek A."/>
            <person name="Scott J.L."/>
            <person name="Geoghagen N.S.M."/>
            <person name="Weidman J.F."/>
            <person name="Fuhrmann J.L."/>
            <person name="Nguyen D."/>
            <person name="Utterback T.R."/>
            <person name="Kelley J.M."/>
            <person name="Peterson J.D."/>
            <person name="Sadow P.W."/>
            <person name="Hanna M.C."/>
            <person name="Cotton M.D."/>
            <person name="Roberts K.M."/>
            <person name="Hurst M.A."/>
            <person name="Kaine B.P."/>
            <person name="Borodovsky M."/>
            <person name="Klenk H.-P."/>
            <person name="Fraser C.M."/>
            <person name="Smith H.O."/>
            <person name="Woese C.R."/>
            <person name="Venter J.C."/>
        </authorList>
    </citation>
    <scope>NUCLEOTIDE SEQUENCE [LARGE SCALE GENOMIC DNA]</scope>
    <source>
        <strain>ATCC 43067 / DSM 2661 / JAL-1 / JCM 10045 / NBRC 100440</strain>
    </source>
</reference>
<proteinExistence type="inferred from homology"/>
<protein>
    <recommendedName>
        <fullName>Uncharacterized transcriptional regulator MJ0080</fullName>
    </recommendedName>
</protein>
<evidence type="ECO:0000305" key="1"/>
<comment type="similarity">
    <text evidence="1">Belongs to the transcriptional regulatory CopG/NikR family.</text>
</comment>
<gene>
    <name type="ordered locus">MJ0080</name>
</gene>
<accession>Q60386</accession>
<dbReference type="EMBL" id="L77117">
    <property type="protein sequence ID" value="AAB98060.1"/>
    <property type="molecule type" value="Genomic_DNA"/>
</dbReference>
<dbReference type="PIR" id="H64309">
    <property type="entry name" value="H64309"/>
</dbReference>
<dbReference type="RefSeq" id="WP_010869572.1">
    <property type="nucleotide sequence ID" value="NC_000909.1"/>
</dbReference>
<dbReference type="SMR" id="Q60386"/>
<dbReference type="STRING" id="243232.MJ_0080"/>
<dbReference type="PaxDb" id="243232-MJ_0080"/>
<dbReference type="EnsemblBacteria" id="AAB98060">
    <property type="protein sequence ID" value="AAB98060"/>
    <property type="gene ID" value="MJ_0080"/>
</dbReference>
<dbReference type="GeneID" id="1450919"/>
<dbReference type="KEGG" id="mja:MJ_0080"/>
<dbReference type="eggNOG" id="arCOG01008">
    <property type="taxonomic scope" value="Archaea"/>
</dbReference>
<dbReference type="HOGENOM" id="CLU_113319_1_2_2"/>
<dbReference type="InParanoid" id="Q60386"/>
<dbReference type="OrthoDB" id="64466at2157"/>
<dbReference type="PhylomeDB" id="Q60386"/>
<dbReference type="Proteomes" id="UP000000805">
    <property type="component" value="Chromosome"/>
</dbReference>
<dbReference type="GO" id="GO:0003677">
    <property type="term" value="F:DNA binding"/>
    <property type="evidence" value="ECO:0000318"/>
    <property type="project" value="GO_Central"/>
</dbReference>
<dbReference type="GO" id="GO:0006355">
    <property type="term" value="P:regulation of DNA-templated transcription"/>
    <property type="evidence" value="ECO:0000318"/>
    <property type="project" value="GO_Central"/>
</dbReference>
<dbReference type="CDD" id="cd22231">
    <property type="entry name" value="RHH_NikR_HicB-like"/>
    <property type="match status" value="1"/>
</dbReference>
<dbReference type="Gene3D" id="3.30.70.1150">
    <property type="entry name" value="ACT-like. Chain A, domain 2"/>
    <property type="match status" value="1"/>
</dbReference>
<dbReference type="Gene3D" id="1.10.1220.10">
    <property type="entry name" value="Met repressor-like"/>
    <property type="match status" value="1"/>
</dbReference>
<dbReference type="InterPro" id="IPR027271">
    <property type="entry name" value="Acetolactate_synth/TF_NikR_C"/>
</dbReference>
<dbReference type="InterPro" id="IPR045865">
    <property type="entry name" value="ACT-like_dom_sf"/>
</dbReference>
<dbReference type="InterPro" id="IPR013321">
    <property type="entry name" value="Arc_rbn_hlx_hlx"/>
</dbReference>
<dbReference type="InterPro" id="IPR002145">
    <property type="entry name" value="CopG"/>
</dbReference>
<dbReference type="InterPro" id="IPR050192">
    <property type="entry name" value="CopG/NikR_regulator"/>
</dbReference>
<dbReference type="InterPro" id="IPR010985">
    <property type="entry name" value="Ribbon_hlx_hlx"/>
</dbReference>
<dbReference type="InterPro" id="IPR014864">
    <property type="entry name" value="TF_NikR_Ni-bd_C"/>
</dbReference>
<dbReference type="PANTHER" id="PTHR34719">
    <property type="entry name" value="NICKEL-RESPONSIVE REGULATOR"/>
    <property type="match status" value="1"/>
</dbReference>
<dbReference type="PANTHER" id="PTHR34719:SF2">
    <property type="entry name" value="NICKEL-RESPONSIVE REGULATOR"/>
    <property type="match status" value="1"/>
</dbReference>
<dbReference type="Pfam" id="PF08753">
    <property type="entry name" value="NikR_C"/>
    <property type="match status" value="1"/>
</dbReference>
<dbReference type="Pfam" id="PF01402">
    <property type="entry name" value="RHH_1"/>
    <property type="match status" value="1"/>
</dbReference>
<dbReference type="SUPFAM" id="SSF55021">
    <property type="entry name" value="ACT-like"/>
    <property type="match status" value="1"/>
</dbReference>
<dbReference type="SUPFAM" id="SSF47598">
    <property type="entry name" value="Ribbon-helix-helix"/>
    <property type="match status" value="1"/>
</dbReference>
<keyword id="KW-0238">DNA-binding</keyword>
<keyword id="KW-1185">Reference proteome</keyword>
<keyword id="KW-0804">Transcription</keyword>
<keyword id="KW-0805">Transcription regulation</keyword>
<feature type="chain" id="PRO_0000139318" description="Uncharacterized transcriptional regulator MJ0080">
    <location>
        <begin position="1"/>
        <end position="127"/>
    </location>
</feature>
<organism>
    <name type="scientific">Methanocaldococcus jannaschii (strain ATCC 43067 / DSM 2661 / JAL-1 / JCM 10045 / NBRC 100440)</name>
    <name type="common">Methanococcus jannaschii</name>
    <dbReference type="NCBI Taxonomy" id="243232"/>
    <lineage>
        <taxon>Archaea</taxon>
        <taxon>Methanobacteriati</taxon>
        <taxon>Methanobacteriota</taxon>
        <taxon>Methanomada group</taxon>
        <taxon>Methanococci</taxon>
        <taxon>Methanococcales</taxon>
        <taxon>Methanocaldococcaceae</taxon>
        <taxon>Methanocaldococcus</taxon>
    </lineage>
</organism>
<name>Y080_METJA</name>